<dbReference type="EMBL" id="CP000510">
    <property type="protein sequence ID" value="ABM04415.1"/>
    <property type="molecule type" value="Genomic_DNA"/>
</dbReference>
<dbReference type="RefSeq" id="WP_011770970.1">
    <property type="nucleotide sequence ID" value="NC_008709.1"/>
</dbReference>
<dbReference type="STRING" id="357804.Ping_2705"/>
<dbReference type="KEGG" id="pin:Ping_2705"/>
<dbReference type="eggNOG" id="COG2718">
    <property type="taxonomic scope" value="Bacteria"/>
</dbReference>
<dbReference type="HOGENOM" id="CLU_049702_0_0_6"/>
<dbReference type="OrthoDB" id="9788289at2"/>
<dbReference type="Proteomes" id="UP000000639">
    <property type="component" value="Chromosome"/>
</dbReference>
<dbReference type="HAMAP" id="MF_01232">
    <property type="entry name" value="UPF0229"/>
    <property type="match status" value="1"/>
</dbReference>
<dbReference type="InterPro" id="IPR006698">
    <property type="entry name" value="UPF0229"/>
</dbReference>
<dbReference type="NCBIfam" id="NF003707">
    <property type="entry name" value="PRK05325.1-2"/>
    <property type="match status" value="1"/>
</dbReference>
<dbReference type="NCBIfam" id="NF003708">
    <property type="entry name" value="PRK05325.1-3"/>
    <property type="match status" value="1"/>
</dbReference>
<dbReference type="PANTHER" id="PTHR30510">
    <property type="entry name" value="UPF0229 PROTEIN YEAH"/>
    <property type="match status" value="1"/>
</dbReference>
<dbReference type="PANTHER" id="PTHR30510:SF2">
    <property type="entry name" value="UPF0229 PROTEIN YEAH"/>
    <property type="match status" value="1"/>
</dbReference>
<dbReference type="Pfam" id="PF04285">
    <property type="entry name" value="DUF444"/>
    <property type="match status" value="1"/>
</dbReference>
<accession>A1SY50</accession>
<protein>
    <recommendedName>
        <fullName evidence="1">UPF0229 protein Ping_2705</fullName>
    </recommendedName>
</protein>
<sequence length="424" mass="48644">MSYIIDRRLNAKKKSTVNRQRFLKRYRKHIKKAVTDAISRRSITDLEHGEEIHIPAEDMKESFFHHGQGGHAKRVLPGNQDFIGGDRIERPPSGGAGGSGSGASDSGKGEDEFVFQITQAEFLDFMFDELALPNMIKRQLLGSDEFKLHQAGFSNQGSPGQVDVVRSLKSAHARRIALTLSKRKKLKALEKQLHLLVAKEPVLKNQVEIEQLREKISTLKSRVKRVPWLDDFDLKYHLRAKEPAPQAKAVMFCIMDVSGSMNQATKEIAKRFFILLYLFIQRNYQRTEIVFIRHHTVAMEVDEQEFFYSRETGGTIVSSALKLMQQIIEQRYPLGDWNIYAAQASDGDNWNNDSAVCKEILCKALLPKLQYFSYIEITPNAHQLLWHSYQQVKANFPDTFAMEQVVDAAEIYTVFREIFHKQVI</sequence>
<evidence type="ECO:0000255" key="1">
    <source>
        <dbReference type="HAMAP-Rule" id="MF_01232"/>
    </source>
</evidence>
<evidence type="ECO:0000256" key="2">
    <source>
        <dbReference type="SAM" id="MobiDB-lite"/>
    </source>
</evidence>
<keyword id="KW-1185">Reference proteome</keyword>
<organism>
    <name type="scientific">Psychromonas ingrahamii (strain DSM 17664 / CCUG 51855 / 37)</name>
    <dbReference type="NCBI Taxonomy" id="357804"/>
    <lineage>
        <taxon>Bacteria</taxon>
        <taxon>Pseudomonadati</taxon>
        <taxon>Pseudomonadota</taxon>
        <taxon>Gammaproteobacteria</taxon>
        <taxon>Alteromonadales</taxon>
        <taxon>Psychromonadaceae</taxon>
        <taxon>Psychromonas</taxon>
    </lineage>
</organism>
<name>Y2705_PSYIN</name>
<feature type="chain" id="PRO_1000066877" description="UPF0229 protein Ping_2705">
    <location>
        <begin position="1"/>
        <end position="424"/>
    </location>
</feature>
<feature type="region of interest" description="Disordered" evidence="2">
    <location>
        <begin position="77"/>
        <end position="108"/>
    </location>
</feature>
<comment type="similarity">
    <text evidence="1">Belongs to the UPF0229 family.</text>
</comment>
<reference key="1">
    <citation type="journal article" date="2008" name="BMC Genomics">
        <title>Genomics of an extreme psychrophile, Psychromonas ingrahamii.</title>
        <authorList>
            <person name="Riley M."/>
            <person name="Staley J.T."/>
            <person name="Danchin A."/>
            <person name="Wang T.Z."/>
            <person name="Brettin T.S."/>
            <person name="Hauser L.J."/>
            <person name="Land M.L."/>
            <person name="Thompson L.S."/>
        </authorList>
    </citation>
    <scope>NUCLEOTIDE SEQUENCE [LARGE SCALE GENOMIC DNA]</scope>
    <source>
        <strain>DSM 17664 / CCUG 51855 / 37</strain>
    </source>
</reference>
<proteinExistence type="inferred from homology"/>
<gene>
    <name type="ordered locus">Ping_2705</name>
</gene>